<sequence length="149" mass="17198">MHCPFCFAVDTKVIDSRLVGEGSSVRRRRQCLVCNERFTTFEVAELVMPRVIKSNDVREPFNEDKLRSGMLRALEKRPVSADDVEMALNHIKSQLRATGEREVPSKMIGNLVMEQLKKLDKVAYIRFASVYRSFEDIKDFGEEIARLQD</sequence>
<feature type="chain" id="PRO_1000124544" description="Transcriptional repressor NrdR">
    <location>
        <begin position="1"/>
        <end position="149"/>
    </location>
</feature>
<feature type="domain" description="ATP-cone" evidence="1">
    <location>
        <begin position="49"/>
        <end position="139"/>
    </location>
</feature>
<feature type="zinc finger region" evidence="1">
    <location>
        <begin position="3"/>
        <end position="34"/>
    </location>
</feature>
<keyword id="KW-0067">ATP-binding</keyword>
<keyword id="KW-0238">DNA-binding</keyword>
<keyword id="KW-0479">Metal-binding</keyword>
<keyword id="KW-0547">Nucleotide-binding</keyword>
<keyword id="KW-0678">Repressor</keyword>
<keyword id="KW-0804">Transcription</keyword>
<keyword id="KW-0805">Transcription regulation</keyword>
<keyword id="KW-0862">Zinc</keyword>
<keyword id="KW-0863">Zinc-finger</keyword>
<protein>
    <recommendedName>
        <fullName evidence="1">Transcriptional repressor NrdR</fullName>
    </recommendedName>
</protein>
<dbReference type="EMBL" id="CP001120">
    <property type="protein sequence ID" value="ACF66945.1"/>
    <property type="molecule type" value="Genomic_DNA"/>
</dbReference>
<dbReference type="RefSeq" id="WP_000543533.1">
    <property type="nucleotide sequence ID" value="NC_011083.1"/>
</dbReference>
<dbReference type="SMR" id="B4T8Q6"/>
<dbReference type="GeneID" id="66754886"/>
<dbReference type="KEGG" id="seh:SeHA_C0517"/>
<dbReference type="HOGENOM" id="CLU_108412_0_0_6"/>
<dbReference type="Proteomes" id="UP000001866">
    <property type="component" value="Chromosome"/>
</dbReference>
<dbReference type="GO" id="GO:0005524">
    <property type="term" value="F:ATP binding"/>
    <property type="evidence" value="ECO:0007669"/>
    <property type="project" value="UniProtKB-KW"/>
</dbReference>
<dbReference type="GO" id="GO:0003677">
    <property type="term" value="F:DNA binding"/>
    <property type="evidence" value="ECO:0007669"/>
    <property type="project" value="UniProtKB-KW"/>
</dbReference>
<dbReference type="GO" id="GO:0008270">
    <property type="term" value="F:zinc ion binding"/>
    <property type="evidence" value="ECO:0007669"/>
    <property type="project" value="UniProtKB-UniRule"/>
</dbReference>
<dbReference type="GO" id="GO:0045892">
    <property type="term" value="P:negative regulation of DNA-templated transcription"/>
    <property type="evidence" value="ECO:0007669"/>
    <property type="project" value="UniProtKB-UniRule"/>
</dbReference>
<dbReference type="HAMAP" id="MF_00440">
    <property type="entry name" value="NrdR"/>
    <property type="match status" value="1"/>
</dbReference>
<dbReference type="InterPro" id="IPR005144">
    <property type="entry name" value="ATP-cone_dom"/>
</dbReference>
<dbReference type="InterPro" id="IPR055173">
    <property type="entry name" value="NrdR-like_N"/>
</dbReference>
<dbReference type="InterPro" id="IPR003796">
    <property type="entry name" value="RNR_NrdR-like"/>
</dbReference>
<dbReference type="NCBIfam" id="TIGR00244">
    <property type="entry name" value="transcriptional regulator NrdR"/>
    <property type="match status" value="1"/>
</dbReference>
<dbReference type="PANTHER" id="PTHR30455">
    <property type="entry name" value="TRANSCRIPTIONAL REPRESSOR NRDR"/>
    <property type="match status" value="1"/>
</dbReference>
<dbReference type="PANTHER" id="PTHR30455:SF2">
    <property type="entry name" value="TRANSCRIPTIONAL REPRESSOR NRDR"/>
    <property type="match status" value="1"/>
</dbReference>
<dbReference type="Pfam" id="PF03477">
    <property type="entry name" value="ATP-cone"/>
    <property type="match status" value="1"/>
</dbReference>
<dbReference type="Pfam" id="PF22811">
    <property type="entry name" value="Zn_ribbon_NrdR"/>
    <property type="match status" value="1"/>
</dbReference>
<dbReference type="PROSITE" id="PS51161">
    <property type="entry name" value="ATP_CONE"/>
    <property type="match status" value="1"/>
</dbReference>
<name>NRDR_SALHS</name>
<reference key="1">
    <citation type="journal article" date="2011" name="J. Bacteriol.">
        <title>Comparative genomics of 28 Salmonella enterica isolates: evidence for CRISPR-mediated adaptive sublineage evolution.</title>
        <authorList>
            <person name="Fricke W.F."/>
            <person name="Mammel M.K."/>
            <person name="McDermott P.F."/>
            <person name="Tartera C."/>
            <person name="White D.G."/>
            <person name="Leclerc J.E."/>
            <person name="Ravel J."/>
            <person name="Cebula T.A."/>
        </authorList>
    </citation>
    <scope>NUCLEOTIDE SEQUENCE [LARGE SCALE GENOMIC DNA]</scope>
    <source>
        <strain>SL476</strain>
    </source>
</reference>
<accession>B4T8Q6</accession>
<evidence type="ECO:0000255" key="1">
    <source>
        <dbReference type="HAMAP-Rule" id="MF_00440"/>
    </source>
</evidence>
<organism>
    <name type="scientific">Salmonella heidelberg (strain SL476)</name>
    <dbReference type="NCBI Taxonomy" id="454169"/>
    <lineage>
        <taxon>Bacteria</taxon>
        <taxon>Pseudomonadati</taxon>
        <taxon>Pseudomonadota</taxon>
        <taxon>Gammaproteobacteria</taxon>
        <taxon>Enterobacterales</taxon>
        <taxon>Enterobacteriaceae</taxon>
        <taxon>Salmonella</taxon>
    </lineage>
</organism>
<comment type="function">
    <text evidence="1">Negatively regulates transcription of bacterial ribonucleotide reductase nrd genes and operons by binding to NrdR-boxes.</text>
</comment>
<comment type="cofactor">
    <cofactor evidence="1">
        <name>Zn(2+)</name>
        <dbReference type="ChEBI" id="CHEBI:29105"/>
    </cofactor>
    <text evidence="1">Binds 1 zinc ion.</text>
</comment>
<comment type="similarity">
    <text evidence="1">Belongs to the NrdR family.</text>
</comment>
<proteinExistence type="inferred from homology"/>
<gene>
    <name evidence="1" type="primary">nrdR</name>
    <name type="ordered locus">SeHA_C0517</name>
</gene>